<keyword id="KW-0119">Carbohydrate metabolism</keyword>
<keyword id="KW-0456">Lyase</keyword>
<protein>
    <recommendedName>
        <fullName evidence="1">N-acetylmuramic acid 6-phosphate etherase</fullName>
        <shortName evidence="1">MurNAc-6-P etherase</shortName>
        <ecNumber evidence="1">4.2.1.126</ecNumber>
    </recommendedName>
    <alternativeName>
        <fullName evidence="1">N-acetylmuramic acid 6-phosphate hydrolase</fullName>
    </alternativeName>
    <alternativeName>
        <fullName evidence="1">N-acetylmuramic acid 6-phosphate lyase</fullName>
    </alternativeName>
</protein>
<organism>
    <name type="scientific">Vibrio vulnificus (strain YJ016)</name>
    <dbReference type="NCBI Taxonomy" id="196600"/>
    <lineage>
        <taxon>Bacteria</taxon>
        <taxon>Pseudomonadati</taxon>
        <taxon>Pseudomonadota</taxon>
        <taxon>Gammaproteobacteria</taxon>
        <taxon>Vibrionales</taxon>
        <taxon>Vibrionaceae</taxon>
        <taxon>Vibrio</taxon>
    </lineage>
</organism>
<name>MURQ_VIBVY</name>
<proteinExistence type="inferred from homology"/>
<reference key="1">
    <citation type="journal article" date="2003" name="Genome Res.">
        <title>Comparative genome analysis of Vibrio vulnificus, a marine pathogen.</title>
        <authorList>
            <person name="Chen C.-Y."/>
            <person name="Wu K.-M."/>
            <person name="Chang Y.-C."/>
            <person name="Chang C.-H."/>
            <person name="Tsai H.-C."/>
            <person name="Liao T.-L."/>
            <person name="Liu Y.-M."/>
            <person name="Chen H.-J."/>
            <person name="Shen A.B.-T."/>
            <person name="Li J.-C."/>
            <person name="Su T.-L."/>
            <person name="Shao C.-P."/>
            <person name="Lee C.-T."/>
            <person name="Hor L.-I."/>
            <person name="Tsai S.-F."/>
        </authorList>
    </citation>
    <scope>NUCLEOTIDE SEQUENCE [LARGE SCALE GENOMIC DNA]</scope>
    <source>
        <strain>YJ016</strain>
    </source>
</reference>
<sequence length="300" mass="31418">MKIDLSRLVTESRNPASAEIDTLSTVEMLRVINQEDQKVALAVEAVLPHIAQAVDAITHAFAHGGRLIYMGAGTSGRLGILDASECPPTYGTPAELVVGLIAGGHTAILKAVENAEDNRELAQNDLKSLNLTANDVVVGIAASGRTPYVLGGLEYATLIGATTVSIACNPVCPMADAAQIAILPVVGPEVVTGSSRMKAGTAQKLVLNMLTSGAMIRSGKVFGNLMVDVEATNAKLIQRQTNIVVEATGVCAEEAEEALKACDRHCKTAILMILSGLDAEQAKTKLQQHNGFIRAALNDK</sequence>
<evidence type="ECO:0000255" key="1">
    <source>
        <dbReference type="HAMAP-Rule" id="MF_00068"/>
    </source>
</evidence>
<evidence type="ECO:0000305" key="2"/>
<feature type="chain" id="PRO_0000249677" description="N-acetylmuramic acid 6-phosphate etherase">
    <location>
        <begin position="1"/>
        <end position="300"/>
    </location>
</feature>
<feature type="domain" description="SIS" evidence="1">
    <location>
        <begin position="57"/>
        <end position="220"/>
    </location>
</feature>
<feature type="active site" description="Proton donor" evidence="1">
    <location>
        <position position="85"/>
    </location>
</feature>
<feature type="active site" evidence="1">
    <location>
        <position position="116"/>
    </location>
</feature>
<comment type="function">
    <text evidence="1">Specifically catalyzes the cleavage of the D-lactyl ether substituent of MurNAc 6-phosphate, producing GlcNAc 6-phosphate and D-lactate. Together with AnmK, is also required for the utilization of anhydro-N-acetylmuramic acid (anhMurNAc) either imported from the medium or derived from its own cell wall murein, and thus plays a role in cell wall recycling.</text>
</comment>
<comment type="catalytic activity">
    <reaction evidence="1">
        <text>N-acetyl-D-muramate 6-phosphate + H2O = N-acetyl-D-glucosamine 6-phosphate + (R)-lactate</text>
        <dbReference type="Rhea" id="RHEA:26410"/>
        <dbReference type="ChEBI" id="CHEBI:15377"/>
        <dbReference type="ChEBI" id="CHEBI:16004"/>
        <dbReference type="ChEBI" id="CHEBI:57513"/>
        <dbReference type="ChEBI" id="CHEBI:58722"/>
        <dbReference type="EC" id="4.2.1.126"/>
    </reaction>
</comment>
<comment type="pathway">
    <text evidence="1">Amino-sugar metabolism; 1,6-anhydro-N-acetylmuramate degradation.</text>
</comment>
<comment type="pathway">
    <text evidence="1">Amino-sugar metabolism; N-acetylmuramate degradation.</text>
</comment>
<comment type="pathway">
    <text evidence="1">Cell wall biogenesis; peptidoglycan recycling.</text>
</comment>
<comment type="subunit">
    <text evidence="1">Homodimer.</text>
</comment>
<comment type="miscellaneous">
    <text evidence="1">A lyase-type mechanism (elimination/hydration) is suggested for the cleavage of the lactyl ether bond of MurNAc 6-phosphate, with the formation of an alpha,beta-unsaturated aldehyde intermediate with (E)-stereochemistry, followed by the syn addition of water to give product.</text>
</comment>
<comment type="similarity">
    <text evidence="1">Belongs to the GCKR-like family. MurNAc-6-P etherase subfamily.</text>
</comment>
<comment type="sequence caution" evidence="2">
    <conflict type="erroneous initiation">
        <sequence resource="EMBL-CDS" id="BAC97693"/>
    </conflict>
</comment>
<gene>
    <name evidence="1" type="primary">murQ</name>
    <name type="ordered locus">VVA1667</name>
</gene>
<dbReference type="EC" id="4.2.1.126" evidence="1"/>
<dbReference type="EMBL" id="BA000038">
    <property type="protein sequence ID" value="BAC97693.1"/>
    <property type="status" value="ALT_INIT"/>
    <property type="molecule type" value="Genomic_DNA"/>
</dbReference>
<dbReference type="RefSeq" id="WP_026130983.1">
    <property type="nucleotide sequence ID" value="NC_005140.1"/>
</dbReference>
<dbReference type="SMR" id="Q7MBS3"/>
<dbReference type="STRING" id="672.VV93_v1c45270"/>
<dbReference type="KEGG" id="vvy:VVA1667"/>
<dbReference type="eggNOG" id="COG2103">
    <property type="taxonomic scope" value="Bacteria"/>
</dbReference>
<dbReference type="HOGENOM" id="CLU_049049_1_1_6"/>
<dbReference type="UniPathway" id="UPA00342"/>
<dbReference type="UniPathway" id="UPA00343"/>
<dbReference type="UniPathway" id="UPA00544"/>
<dbReference type="Proteomes" id="UP000002675">
    <property type="component" value="Chromosome II"/>
</dbReference>
<dbReference type="GO" id="GO:0097367">
    <property type="term" value="F:carbohydrate derivative binding"/>
    <property type="evidence" value="ECO:0007669"/>
    <property type="project" value="InterPro"/>
</dbReference>
<dbReference type="GO" id="GO:0016835">
    <property type="term" value="F:carbon-oxygen lyase activity"/>
    <property type="evidence" value="ECO:0007669"/>
    <property type="project" value="UniProtKB-UniRule"/>
</dbReference>
<dbReference type="GO" id="GO:0016803">
    <property type="term" value="F:ether hydrolase activity"/>
    <property type="evidence" value="ECO:0007669"/>
    <property type="project" value="TreeGrafter"/>
</dbReference>
<dbReference type="GO" id="GO:0097175">
    <property type="term" value="P:1,6-anhydro-N-acetyl-beta-muramic acid catabolic process"/>
    <property type="evidence" value="ECO:0007669"/>
    <property type="project" value="UniProtKB-UniRule"/>
</dbReference>
<dbReference type="GO" id="GO:0046348">
    <property type="term" value="P:amino sugar catabolic process"/>
    <property type="evidence" value="ECO:0007669"/>
    <property type="project" value="InterPro"/>
</dbReference>
<dbReference type="GO" id="GO:0097173">
    <property type="term" value="P:N-acetylmuramic acid catabolic process"/>
    <property type="evidence" value="ECO:0007669"/>
    <property type="project" value="UniProtKB-UniPathway"/>
</dbReference>
<dbReference type="GO" id="GO:0009254">
    <property type="term" value="P:peptidoglycan turnover"/>
    <property type="evidence" value="ECO:0007669"/>
    <property type="project" value="UniProtKB-UniRule"/>
</dbReference>
<dbReference type="CDD" id="cd05007">
    <property type="entry name" value="SIS_Etherase"/>
    <property type="match status" value="1"/>
</dbReference>
<dbReference type="FunFam" id="1.10.8.1080:FF:000001">
    <property type="entry name" value="N-acetylmuramic acid 6-phosphate etherase"/>
    <property type="match status" value="1"/>
</dbReference>
<dbReference type="FunFam" id="3.40.50.10490:FF:000014">
    <property type="entry name" value="N-acetylmuramic acid 6-phosphate etherase"/>
    <property type="match status" value="1"/>
</dbReference>
<dbReference type="Gene3D" id="1.10.8.1080">
    <property type="match status" value="1"/>
</dbReference>
<dbReference type="Gene3D" id="3.40.50.10490">
    <property type="entry name" value="Glucose-6-phosphate isomerase like protein, domain 1"/>
    <property type="match status" value="1"/>
</dbReference>
<dbReference type="HAMAP" id="MF_00068">
    <property type="entry name" value="MurQ"/>
    <property type="match status" value="1"/>
</dbReference>
<dbReference type="InterPro" id="IPR005488">
    <property type="entry name" value="Etherase_MurQ"/>
</dbReference>
<dbReference type="InterPro" id="IPR005486">
    <property type="entry name" value="Glucokinase_regulatory_CS"/>
</dbReference>
<dbReference type="InterPro" id="IPR040190">
    <property type="entry name" value="MURQ/GCKR"/>
</dbReference>
<dbReference type="InterPro" id="IPR001347">
    <property type="entry name" value="SIS_dom"/>
</dbReference>
<dbReference type="InterPro" id="IPR046348">
    <property type="entry name" value="SIS_dom_sf"/>
</dbReference>
<dbReference type="NCBIfam" id="TIGR00274">
    <property type="entry name" value="N-acetylmuramic acid 6-phosphate etherase"/>
    <property type="match status" value="1"/>
</dbReference>
<dbReference type="NCBIfam" id="NF003915">
    <property type="entry name" value="PRK05441.1"/>
    <property type="match status" value="1"/>
</dbReference>
<dbReference type="NCBIfam" id="NF009222">
    <property type="entry name" value="PRK12570.1"/>
    <property type="match status" value="1"/>
</dbReference>
<dbReference type="PANTHER" id="PTHR10088">
    <property type="entry name" value="GLUCOKINASE REGULATORY PROTEIN"/>
    <property type="match status" value="1"/>
</dbReference>
<dbReference type="PANTHER" id="PTHR10088:SF4">
    <property type="entry name" value="GLUCOKINASE REGULATORY PROTEIN"/>
    <property type="match status" value="1"/>
</dbReference>
<dbReference type="Pfam" id="PF22645">
    <property type="entry name" value="GKRP_SIS_N"/>
    <property type="match status" value="1"/>
</dbReference>
<dbReference type="SUPFAM" id="SSF53697">
    <property type="entry name" value="SIS domain"/>
    <property type="match status" value="1"/>
</dbReference>
<dbReference type="PROSITE" id="PS01272">
    <property type="entry name" value="GCKR"/>
    <property type="match status" value="1"/>
</dbReference>
<dbReference type="PROSITE" id="PS51464">
    <property type="entry name" value="SIS"/>
    <property type="match status" value="1"/>
</dbReference>
<accession>Q7MBS3</accession>